<dbReference type="EC" id="1.14.14.17" evidence="11"/>
<dbReference type="EMBL" id="CU329671">
    <property type="protein sequence ID" value="CAC22613.1"/>
    <property type="molecule type" value="Genomic_DNA"/>
</dbReference>
<dbReference type="RefSeq" id="NP_595351.1">
    <property type="nucleotide sequence ID" value="NM_001021259.2"/>
</dbReference>
<dbReference type="SMR" id="Q9C1W3"/>
<dbReference type="BioGRID" id="277621">
    <property type="interactions" value="3"/>
</dbReference>
<dbReference type="FunCoup" id="Q9C1W3">
    <property type="interactions" value="185"/>
</dbReference>
<dbReference type="STRING" id="284812.Q9C1W3"/>
<dbReference type="iPTMnet" id="Q9C1W3"/>
<dbReference type="PaxDb" id="4896-SPBC713.12.1"/>
<dbReference type="EnsemblFungi" id="SPBC713.12.1">
    <property type="protein sequence ID" value="SPBC713.12.1:pep"/>
    <property type="gene ID" value="SPBC713.12"/>
</dbReference>
<dbReference type="GeneID" id="2541106"/>
<dbReference type="KEGG" id="spo:2541106"/>
<dbReference type="PomBase" id="SPBC713.12">
    <property type="gene designation" value="erg1"/>
</dbReference>
<dbReference type="VEuPathDB" id="FungiDB:SPBC713.12"/>
<dbReference type="eggNOG" id="KOG1298">
    <property type="taxonomic scope" value="Eukaryota"/>
</dbReference>
<dbReference type="HOGENOM" id="CLU_026390_0_0_1"/>
<dbReference type="InParanoid" id="Q9C1W3"/>
<dbReference type="OMA" id="AKRTFYW"/>
<dbReference type="PhylomeDB" id="Q9C1W3"/>
<dbReference type="Reactome" id="R-SPO-191273">
    <property type="pathway name" value="Cholesterol biosynthesis"/>
</dbReference>
<dbReference type="UniPathway" id="UPA00767">
    <property type="reaction ID" value="UER00752"/>
</dbReference>
<dbReference type="UniPathway" id="UPA00768"/>
<dbReference type="PRO" id="PR:Q9C1W3"/>
<dbReference type="Proteomes" id="UP000002485">
    <property type="component" value="Chromosome II"/>
</dbReference>
<dbReference type="GO" id="GO:0005737">
    <property type="term" value="C:cytoplasm"/>
    <property type="evidence" value="ECO:0007005"/>
    <property type="project" value="PomBase"/>
</dbReference>
<dbReference type="GO" id="GO:0005783">
    <property type="term" value="C:endoplasmic reticulum"/>
    <property type="evidence" value="ECO:0007005"/>
    <property type="project" value="PomBase"/>
</dbReference>
<dbReference type="GO" id="GO:0005789">
    <property type="term" value="C:endoplasmic reticulum membrane"/>
    <property type="evidence" value="ECO:0000250"/>
    <property type="project" value="PomBase"/>
</dbReference>
<dbReference type="GO" id="GO:0005774">
    <property type="term" value="C:vacuolar membrane"/>
    <property type="evidence" value="ECO:0007669"/>
    <property type="project" value="UniProtKB-SubCell"/>
</dbReference>
<dbReference type="GO" id="GO:0050660">
    <property type="term" value="F:flavin adenine dinucleotide binding"/>
    <property type="evidence" value="ECO:0007669"/>
    <property type="project" value="InterPro"/>
</dbReference>
<dbReference type="GO" id="GO:0004506">
    <property type="term" value="F:squalene monooxygenase activity"/>
    <property type="evidence" value="ECO:0000318"/>
    <property type="project" value="GO_Central"/>
</dbReference>
<dbReference type="GO" id="GO:0006696">
    <property type="term" value="P:ergosterol biosynthetic process"/>
    <property type="evidence" value="ECO:0000318"/>
    <property type="project" value="GO_Central"/>
</dbReference>
<dbReference type="FunFam" id="3.50.50.60:FF:000166">
    <property type="entry name" value="Squalene monooxygenase Erg1"/>
    <property type="match status" value="1"/>
</dbReference>
<dbReference type="Gene3D" id="3.50.50.60">
    <property type="entry name" value="FAD/NAD(P)-binding domain"/>
    <property type="match status" value="1"/>
</dbReference>
<dbReference type="InterPro" id="IPR036188">
    <property type="entry name" value="FAD/NAD-bd_sf"/>
</dbReference>
<dbReference type="InterPro" id="IPR013698">
    <property type="entry name" value="Squalene_epoxidase"/>
</dbReference>
<dbReference type="InterPro" id="IPR040125">
    <property type="entry name" value="Squalene_monox"/>
</dbReference>
<dbReference type="PANTHER" id="PTHR10835">
    <property type="entry name" value="SQUALENE MONOOXYGENASE"/>
    <property type="match status" value="1"/>
</dbReference>
<dbReference type="PANTHER" id="PTHR10835:SF0">
    <property type="entry name" value="SQUALENE MONOOXYGENASE"/>
    <property type="match status" value="1"/>
</dbReference>
<dbReference type="Pfam" id="PF13450">
    <property type="entry name" value="NAD_binding_8"/>
    <property type="match status" value="1"/>
</dbReference>
<dbReference type="Pfam" id="PF08491">
    <property type="entry name" value="SE"/>
    <property type="match status" value="1"/>
</dbReference>
<dbReference type="PRINTS" id="PR00420">
    <property type="entry name" value="RNGMNOXGNASE"/>
</dbReference>
<dbReference type="SUPFAM" id="SSF51905">
    <property type="entry name" value="FAD/NAD(P)-binding domain"/>
    <property type="match status" value="1"/>
</dbReference>
<sequence>MATQDADIIIIGAGITGCALGAALGRQGRKVLVLERDMSEPDRIVGELLQPGGIEALEKIGIADAVEGIDGQWTSGYQIFYGDSNVSVPYPSKPNGGAYQGIGFHYGRFVMNLRKALTSTPNVTVTEATVNELLRDETGEVITGVVTSSKKSESPVEYKAPLTIVCDGCFSKFRKAFIDHPIQVTDHFLGLILTNPDYIAPGRGHVILSKVAPMVLYPISSTEARILINYPGKNLPPMETLKKYVLESCVPNMPEKLRPSLKAAVYNDRLRSMPNQFLPPTVNRTKGMILVGDSNNMRHPLTGGGMTVCFHDAYLLSRFISPSAVPDLLDYERILNQMNKFHWKRKGYSFVINVLSIALYKLFTPKNRYMKALESGCIDYFKRGGNCVEGPIRLLGGLDHSPSHLIGHFYAVCLYGIYQYVLSGPALLMPVRIIESLLIFLQASLVIIPYILSEMSS</sequence>
<protein>
    <recommendedName>
        <fullName evidence="8">Squalene epoxidase erg1</fullName>
        <shortName evidence="9">SE</shortName>
        <ecNumber evidence="11">1.14.14.17</ecNumber>
    </recommendedName>
    <alternativeName>
        <fullName evidence="8">Ergosterol biosynthetic protein 1</fullName>
    </alternativeName>
    <alternativeName>
        <fullName evidence="9">Squalene monooxygenase erg1</fullName>
    </alternativeName>
</protein>
<feature type="chain" id="PRO_0000209850" description="Squalene epoxidase erg1">
    <location>
        <begin position="1"/>
        <end position="457"/>
    </location>
</feature>
<feature type="transmembrane region" description="Helical" evidence="3">
    <location>
        <begin position="347"/>
        <end position="364"/>
    </location>
</feature>
<feature type="transmembrane region" description="Helical" evidence="3">
    <location>
        <begin position="409"/>
        <end position="429"/>
    </location>
</feature>
<feature type="transmembrane region" description="Helical" evidence="3">
    <location>
        <begin position="433"/>
        <end position="453"/>
    </location>
</feature>
<feature type="binding site" evidence="2">
    <location>
        <begin position="15"/>
        <end position="16"/>
    </location>
    <ligand>
        <name>FAD</name>
        <dbReference type="ChEBI" id="CHEBI:57692"/>
    </ligand>
</feature>
<feature type="binding site" evidence="2">
    <location>
        <begin position="35"/>
        <end position="36"/>
    </location>
    <ligand>
        <name>FAD</name>
        <dbReference type="ChEBI" id="CHEBI:57692"/>
    </ligand>
</feature>
<feature type="binding site" evidence="2">
    <location>
        <position position="43"/>
    </location>
    <ligand>
        <name>FAD</name>
        <dbReference type="ChEBI" id="CHEBI:57692"/>
    </ligand>
</feature>
<feature type="binding site" evidence="2">
    <location>
        <position position="114"/>
    </location>
    <ligand>
        <name>FAD</name>
        <dbReference type="ChEBI" id="CHEBI:57692"/>
    </ligand>
</feature>
<feature type="binding site" evidence="2">
    <location>
        <position position="130"/>
    </location>
    <ligand>
        <name>FAD</name>
        <dbReference type="ChEBI" id="CHEBI:57692"/>
    </ligand>
</feature>
<feature type="binding site" evidence="2">
    <location>
        <position position="293"/>
    </location>
    <ligand>
        <name>FAD</name>
        <dbReference type="ChEBI" id="CHEBI:57692"/>
    </ligand>
</feature>
<feature type="binding site" evidence="2">
    <location>
        <position position="306"/>
    </location>
    <ligand>
        <name>FAD</name>
        <dbReference type="ChEBI" id="CHEBI:57692"/>
    </ligand>
</feature>
<feature type="site" description="Important for enzyme activity" evidence="2">
    <location>
        <position position="77"/>
    </location>
</feature>
<proteinExistence type="evidence at transcript level"/>
<reference key="1">
    <citation type="journal article" date="2002" name="Nature">
        <title>The genome sequence of Schizosaccharomyces pombe.</title>
        <authorList>
            <person name="Wood V."/>
            <person name="Gwilliam R."/>
            <person name="Rajandream M.A."/>
            <person name="Lyne M.H."/>
            <person name="Lyne R."/>
            <person name="Stewart A."/>
            <person name="Sgouros J.G."/>
            <person name="Peat N."/>
            <person name="Hayles J."/>
            <person name="Baker S.G."/>
            <person name="Basham D."/>
            <person name="Bowman S."/>
            <person name="Brooks K."/>
            <person name="Brown D."/>
            <person name="Brown S."/>
            <person name="Chillingworth T."/>
            <person name="Churcher C.M."/>
            <person name="Collins M."/>
            <person name="Connor R."/>
            <person name="Cronin A."/>
            <person name="Davis P."/>
            <person name="Feltwell T."/>
            <person name="Fraser A."/>
            <person name="Gentles S."/>
            <person name="Goble A."/>
            <person name="Hamlin N."/>
            <person name="Harris D.E."/>
            <person name="Hidalgo J."/>
            <person name="Hodgson G."/>
            <person name="Holroyd S."/>
            <person name="Hornsby T."/>
            <person name="Howarth S."/>
            <person name="Huckle E.J."/>
            <person name="Hunt S."/>
            <person name="Jagels K."/>
            <person name="James K.D."/>
            <person name="Jones L."/>
            <person name="Jones M."/>
            <person name="Leather S."/>
            <person name="McDonald S."/>
            <person name="McLean J."/>
            <person name="Mooney P."/>
            <person name="Moule S."/>
            <person name="Mungall K.L."/>
            <person name="Murphy L.D."/>
            <person name="Niblett D."/>
            <person name="Odell C."/>
            <person name="Oliver K."/>
            <person name="O'Neil S."/>
            <person name="Pearson D."/>
            <person name="Quail M.A."/>
            <person name="Rabbinowitsch E."/>
            <person name="Rutherford K.M."/>
            <person name="Rutter S."/>
            <person name="Saunders D."/>
            <person name="Seeger K."/>
            <person name="Sharp S."/>
            <person name="Skelton J."/>
            <person name="Simmonds M.N."/>
            <person name="Squares R."/>
            <person name="Squares S."/>
            <person name="Stevens K."/>
            <person name="Taylor K."/>
            <person name="Taylor R.G."/>
            <person name="Tivey A."/>
            <person name="Walsh S.V."/>
            <person name="Warren T."/>
            <person name="Whitehead S."/>
            <person name="Woodward J.R."/>
            <person name="Volckaert G."/>
            <person name="Aert R."/>
            <person name="Robben J."/>
            <person name="Grymonprez B."/>
            <person name="Weltjens I."/>
            <person name="Vanstreels E."/>
            <person name="Rieger M."/>
            <person name="Schaefer M."/>
            <person name="Mueller-Auer S."/>
            <person name="Gabel C."/>
            <person name="Fuchs M."/>
            <person name="Duesterhoeft A."/>
            <person name="Fritzc C."/>
            <person name="Holzer E."/>
            <person name="Moestl D."/>
            <person name="Hilbert H."/>
            <person name="Borzym K."/>
            <person name="Langer I."/>
            <person name="Beck A."/>
            <person name="Lehrach H."/>
            <person name="Reinhardt R."/>
            <person name="Pohl T.M."/>
            <person name="Eger P."/>
            <person name="Zimmermann W."/>
            <person name="Wedler H."/>
            <person name="Wambutt R."/>
            <person name="Purnelle B."/>
            <person name="Goffeau A."/>
            <person name="Cadieu E."/>
            <person name="Dreano S."/>
            <person name="Gloux S."/>
            <person name="Lelaure V."/>
            <person name="Mottier S."/>
            <person name="Galibert F."/>
            <person name="Aves S.J."/>
            <person name="Xiang Z."/>
            <person name="Hunt C."/>
            <person name="Moore K."/>
            <person name="Hurst S.M."/>
            <person name="Lucas M."/>
            <person name="Rochet M."/>
            <person name="Gaillardin C."/>
            <person name="Tallada V.A."/>
            <person name="Garzon A."/>
            <person name="Thode G."/>
            <person name="Daga R.R."/>
            <person name="Cruzado L."/>
            <person name="Jimenez J."/>
            <person name="Sanchez M."/>
            <person name="del Rey F."/>
            <person name="Benito J."/>
            <person name="Dominguez A."/>
            <person name="Revuelta J.L."/>
            <person name="Moreno S."/>
            <person name="Armstrong J."/>
            <person name="Forsburg S.L."/>
            <person name="Cerutti L."/>
            <person name="Lowe T."/>
            <person name="McCombie W.R."/>
            <person name="Paulsen I."/>
            <person name="Potashkin J."/>
            <person name="Shpakovski G.V."/>
            <person name="Ussery D."/>
            <person name="Barrell B.G."/>
            <person name="Nurse P."/>
        </authorList>
    </citation>
    <scope>NUCLEOTIDE SEQUENCE [LARGE SCALE GENOMIC DNA]</scope>
    <source>
        <strain>972 / ATCC 24843</strain>
    </source>
</reference>
<reference key="2">
    <citation type="journal article" date="2006" name="Nat. Biotechnol.">
        <title>ORFeome cloning and global analysis of protein localization in the fission yeast Schizosaccharomyces pombe.</title>
        <authorList>
            <person name="Matsuyama A."/>
            <person name="Arai R."/>
            <person name="Yashiroda Y."/>
            <person name="Shirai A."/>
            <person name="Kamata A."/>
            <person name="Sekido S."/>
            <person name="Kobayashi Y."/>
            <person name="Hashimoto A."/>
            <person name="Hamamoto M."/>
            <person name="Hiraoka Y."/>
            <person name="Horinouchi S."/>
            <person name="Yoshida M."/>
        </authorList>
    </citation>
    <scope>SUBCELLULAR LOCATION [LARGE SCALE ANALYSIS]</scope>
</reference>
<reference key="3">
    <citation type="journal article" date="1995" name="FEMS Microbiol. Lett.">
        <title>Identification of 24-methylene-24,25-dihydrolanosterol as a precursor of ergosterol in the yeasts Schizosaccharomyces pombe and Schizosaccharomyces octosporus.</title>
        <authorList>
            <person name="Harmouch N."/>
            <person name="Coulon J."/>
            <person name="Bonaly R."/>
        </authorList>
    </citation>
    <scope>FUNCTION</scope>
</reference>
<reference key="4">
    <citation type="journal article" date="2006" name="Mol. Cell. Biol.">
        <title>Sterol regulatory element binding protein is a principal regulator of anaerobic gene expression in fission yeast.</title>
        <authorList>
            <person name="Todd B.L."/>
            <person name="Stewart E.V."/>
            <person name="Burg J.S."/>
            <person name="Hughes A.L."/>
            <person name="Espenshade P.J."/>
        </authorList>
    </citation>
    <scope>INDUCTION</scope>
</reference>
<reference key="5">
    <citation type="journal article" date="2008" name="Microbiology">
        <title>Multiple functions of ergosterol in the fission yeast Schizosaccharomyces pombe.</title>
        <authorList>
            <person name="Iwaki T."/>
            <person name="Iefuji H."/>
            <person name="Hiraga Y."/>
            <person name="Hosomi A."/>
            <person name="Morita T."/>
            <person name="Giga-Hama Y."/>
            <person name="Takegawa K."/>
        </authorList>
    </citation>
    <scope>FUNCTION</scope>
</reference>
<reference key="6">
    <citation type="journal article" date="2021" name="Biomol. Ther.">
        <title>Systematic target screening revealed that tif302 could be an off-target of the antifungal terbinafine in fission yeast.</title>
        <authorList>
            <person name="Lee S."/>
            <person name="Nam M."/>
            <person name="Lee A.R."/>
            <person name="Lee J."/>
            <person name="Woo J."/>
            <person name="Kang N.S."/>
            <person name="Balupuri A."/>
            <person name="Lee M."/>
            <person name="Kim S.Y."/>
            <person name="Ro H."/>
            <person name="Choi Y.W."/>
            <person name="Kim D.U."/>
            <person name="Hoe K.L."/>
        </authorList>
    </citation>
    <scope>FUNCTION</scope>
    <scope>DISRUPTION PHENOTYPE</scope>
    <scope>INDUCTION</scope>
    <scope>ACTIVITY REGULATION</scope>
    <scope>PATHWAY</scope>
</reference>
<evidence type="ECO:0000250" key="1">
    <source>
        <dbReference type="UniProtKB" id="P32476"/>
    </source>
</evidence>
<evidence type="ECO:0000250" key="2">
    <source>
        <dbReference type="UniProtKB" id="Q14534"/>
    </source>
</evidence>
<evidence type="ECO:0000255" key="3"/>
<evidence type="ECO:0000269" key="4">
    <source>
    </source>
</evidence>
<evidence type="ECO:0000269" key="5">
    <source>
    </source>
</evidence>
<evidence type="ECO:0000269" key="6">
    <source>
    </source>
</evidence>
<evidence type="ECO:0000269" key="7">
    <source>
    </source>
</evidence>
<evidence type="ECO:0000303" key="8">
    <source>
    </source>
</evidence>
<evidence type="ECO:0000305" key="9"/>
<evidence type="ECO:0000305" key="10">
    <source>
    </source>
</evidence>
<evidence type="ECO:0000305" key="11">
    <source>
    </source>
</evidence>
<evidence type="ECO:0000305" key="12">
    <source>
    </source>
</evidence>
<name>ERG1_SCHPO</name>
<gene>
    <name evidence="8" type="primary">erg1</name>
    <name type="ORF">SPBC713.12</name>
</gene>
<organism>
    <name type="scientific">Schizosaccharomyces pombe (strain 972 / ATCC 24843)</name>
    <name type="common">Fission yeast</name>
    <dbReference type="NCBI Taxonomy" id="284812"/>
    <lineage>
        <taxon>Eukaryota</taxon>
        <taxon>Fungi</taxon>
        <taxon>Dikarya</taxon>
        <taxon>Ascomycota</taxon>
        <taxon>Taphrinomycotina</taxon>
        <taxon>Schizosaccharomycetes</taxon>
        <taxon>Schizosaccharomycetales</taxon>
        <taxon>Schizosaccharomycetaceae</taxon>
        <taxon>Schizosaccharomyces</taxon>
    </lineage>
</organism>
<accession>Q9C1W3</accession>
<comment type="function">
    <text evidence="6 10 12">Squalene epoxidase; part of the third module of ergosterol biosynthesis pathway that includes by the late steps of the pathway (PubMed:33223513). Erg1 catalyzes the epoxidation of squalene into 2,3-epoxysqualene (PubMed:33223513). The third module or late pathway involves the ergosterol synthesis itself through consecutive reactions that mainly occur in the endoplasmic reticulum (ER) membrane. Firstly, the squalene synthase erg9 catalyzes the condensation of 2 farnesyl pyrophosphate moieties to form squalene, which is the precursor of all steroids. Secondly, squalene is converted into lanosterol by the consecutive action of the squalene epoxidase erg1 and the lanosterol synthase erg7. The lanosterol 14-alpha-demethylase erg11/cyp1 catalyzes C14-demethylation of lanosterol to produce 4,4'-dimethyl cholesta-8,14,24-triene-3-beta-ol. In the next steps, a complex process involving various demethylation, reduction and desaturation reactions catalyzed by the C-14 reductase erg24 and the C-4 demethylation complex erg25-erg26-erg27 leads to the production of zymosterol. Erg28 likely functions in the C-4 demethylation complex reaction by tethering erg26 and Erg27 to the endoplasmic reticulum or to facilitate interaction between these proteins. Then, the sterol 24-C-methyltransferase erg6 catalyzes the methyl transfer from S-adenosyl-methionine to the C-24 of zymosterol to form fecosterol. The C-8 sterol isomerase erg2 catalyzes the reaction which results in unsaturation at C-7 in the B ring of sterols and thus converts fecosterol to episterol. The sterol-C5-desaturases erg31 and erg32 then catalyze the introduction of a C-5 double bond in the B ring to produce 5-dehydroepisterol. The C-22 sterol desaturase erg5 further converts 5-dehydroepisterol into ergosta-5,7,22,24(28)-tetraen-3beta-ol by forming the C-22(23) double bond in the sterol side chain. Finally, ergosta-5,7,22,24(28)-tetraen-3beta-ol is substrate of the C-24(28) sterol reductase erg4 to produce ergosterol (Probable) (PubMed:18310029). In the genus Schizosaccharomyces, a second route exists between lanosterol and fecosterol, via the methylation of lanosterol to eburicol by erg6, followed by C14-demethylation by erg11/cyp1 and C4-demethylation by the demethylation complex erg25-erg26-erg27 (Probable) (PubMed:8586261).</text>
</comment>
<comment type="catalytic activity">
    <reaction evidence="11">
        <text>squalene + reduced [NADPH--hemoprotein reductase] + O2 = (S)-2,3-epoxysqualene + oxidized [NADPH--hemoprotein reductase] + H2O + H(+)</text>
        <dbReference type="Rhea" id="RHEA:25282"/>
        <dbReference type="Rhea" id="RHEA-COMP:11964"/>
        <dbReference type="Rhea" id="RHEA-COMP:11965"/>
        <dbReference type="ChEBI" id="CHEBI:15377"/>
        <dbReference type="ChEBI" id="CHEBI:15378"/>
        <dbReference type="ChEBI" id="CHEBI:15379"/>
        <dbReference type="ChEBI" id="CHEBI:15440"/>
        <dbReference type="ChEBI" id="CHEBI:15441"/>
        <dbReference type="ChEBI" id="CHEBI:57618"/>
        <dbReference type="ChEBI" id="CHEBI:58210"/>
        <dbReference type="EC" id="1.14.14.17"/>
    </reaction>
    <physiologicalReaction direction="left-to-right" evidence="11">
        <dbReference type="Rhea" id="RHEA:25283"/>
    </physiologicalReaction>
</comment>
<comment type="cofactor">
    <cofactor evidence="2">
        <name>FAD</name>
        <dbReference type="ChEBI" id="CHEBI:57692"/>
    </cofactor>
</comment>
<comment type="activity regulation">
    <text evidence="6">Activity is blocked by the allylamine class antifungal terbinafine.</text>
</comment>
<comment type="pathway">
    <text evidence="6">Terpene metabolism; lanosterol biosynthesis; lanosterol from farnesyl diphosphate: step 2/3.</text>
</comment>
<comment type="pathway">
    <text evidence="6">Steroid metabolism; ergosterol biosynthesis.</text>
</comment>
<comment type="subcellular location">
    <subcellularLocation>
        <location evidence="1">Microsome membrane</location>
        <topology evidence="9">Multi-pass membrane protein</topology>
    </subcellularLocation>
    <subcellularLocation>
        <location evidence="5">Endoplasmic reticulum membrane</location>
        <topology evidence="5">Multi-pass membrane protein</topology>
    </subcellularLocation>
    <subcellularLocation>
        <location evidence="5">Vacuole membrane</location>
        <topology evidence="5">Multi-pass membrane protein</topology>
    </subcellularLocation>
</comment>
<comment type="induction">
    <text evidence="4 6">Expression is anaerobically up-regulated via the sterol regulatory element binding protein sre1 (PubMed:16537923). Expression is reduced in cells deleted for the translation-related genes tif302, rpl2501, and rpl31, rps2402, rps2801, rps1002, rps1601, rps1802, rps1901, and rpl1602; or the transcription-related genes spt7, spt20 and elp2.</text>
</comment>
<comment type="disruption phenotype">
    <text evidence="6">Leads to the accumulation of squalene.</text>
</comment>
<comment type="miscellaneous">
    <text evidence="7">In Aspergillus, the biosynthesis pathway of the sterol precursors leading to the prevalent sterol ergosterol differs from yeast. The ringsystem of lanosterol in S.cerevisiae is firstly demethylised in three enzymatic steps leading to the intermediate zymosterol and secondly a methyl group is added to zymosterol by the sterol 24-C-methyltransferase to form fecosterol. In Aspergillus, lanosterol is firstly transmethylated by the sterol 24-C-methyltransferase leading to the intermediate eburicol and secondly demethylated in three steps to form fecosterol. In the genus Schizosaccharomyces, 2 routes exist from lanosterol to erposterol: the classical one via zymosterol and the second one via the formation of eburicol followed by demethylation.</text>
</comment>
<comment type="similarity">
    <text evidence="9">Belongs to the squalene monooxygenase family.</text>
</comment>
<keyword id="KW-0256">Endoplasmic reticulum</keyword>
<keyword id="KW-0274">FAD</keyword>
<keyword id="KW-0285">Flavoprotein</keyword>
<keyword id="KW-0472">Membrane</keyword>
<keyword id="KW-0492">Microsome</keyword>
<keyword id="KW-0560">Oxidoreductase</keyword>
<keyword id="KW-1185">Reference proteome</keyword>
<keyword id="KW-0812">Transmembrane</keyword>
<keyword id="KW-1133">Transmembrane helix</keyword>
<keyword id="KW-0926">Vacuole</keyword>